<sequence>MKGRAWKFGDDVDTDAVIPGRYLIFNTPGELAKYTFEGVRPDFAKNVHENDIVVAGSNFGCGSSREHAPLALKGSKVSCVIAKSFARIFFRNAINIGVPVLECPDTDKIDDGDELEVDISTGVIQNRTKGETYQATPLPDFVREIVDEGGLIEYARKLVSER</sequence>
<organism>
    <name type="scientific">Methanosarcina mazei (strain ATCC BAA-159 / DSM 3647 / Goe1 / Go1 / JCM 11833 / OCM 88)</name>
    <name type="common">Methanosarcina frisia</name>
    <dbReference type="NCBI Taxonomy" id="192952"/>
    <lineage>
        <taxon>Archaea</taxon>
        <taxon>Methanobacteriati</taxon>
        <taxon>Methanobacteriota</taxon>
        <taxon>Stenosarchaea group</taxon>
        <taxon>Methanomicrobia</taxon>
        <taxon>Methanosarcinales</taxon>
        <taxon>Methanosarcinaceae</taxon>
        <taxon>Methanosarcina</taxon>
    </lineage>
</organism>
<comment type="function">
    <text evidence="1">Catalyzes the isomerization between 2-isopropylmalate and 3-isopropylmalate, via the formation of 2-isopropylmaleate.</text>
</comment>
<comment type="catalytic activity">
    <reaction>
        <text>(2R,3S)-3-isopropylmalate = (2S)-2-isopropylmalate</text>
        <dbReference type="Rhea" id="RHEA:32287"/>
        <dbReference type="ChEBI" id="CHEBI:1178"/>
        <dbReference type="ChEBI" id="CHEBI:35121"/>
        <dbReference type="EC" id="4.2.1.33"/>
    </reaction>
</comment>
<comment type="pathway">
    <text>Amino-acid biosynthesis; L-leucine biosynthesis; L-leucine from 3-methyl-2-oxobutanoate: step 2/4.</text>
</comment>
<comment type="subunit">
    <text evidence="1">Heterodimer of LeuC and LeuD.</text>
</comment>
<comment type="similarity">
    <text evidence="2">Belongs to the LeuD family. LeuD type 2 subfamily.</text>
</comment>
<protein>
    <recommendedName>
        <fullName>3-isopropylmalate dehydratase small subunit</fullName>
        <ecNumber>4.2.1.33</ecNumber>
    </recommendedName>
    <alternativeName>
        <fullName>Alpha-IPM isomerase</fullName>
        <shortName>IPMI</shortName>
    </alternativeName>
    <alternativeName>
        <fullName>Isopropylmalate isomerase</fullName>
    </alternativeName>
</protein>
<dbReference type="EC" id="4.2.1.33"/>
<dbReference type="EMBL" id="AE008384">
    <property type="protein sequence ID" value="AAM31186.1"/>
    <property type="molecule type" value="Genomic_DNA"/>
</dbReference>
<dbReference type="RefSeq" id="WP_011033436.1">
    <property type="nucleotide sequence ID" value="NC_003901.1"/>
</dbReference>
<dbReference type="SMR" id="Q8PWT6"/>
<dbReference type="KEGG" id="mma:MM_1490"/>
<dbReference type="PATRIC" id="fig|192952.21.peg.1722"/>
<dbReference type="eggNOG" id="arCOG02230">
    <property type="taxonomic scope" value="Archaea"/>
</dbReference>
<dbReference type="HOGENOM" id="CLU_081378_1_1_2"/>
<dbReference type="UniPathway" id="UPA00048">
    <property type="reaction ID" value="UER00071"/>
</dbReference>
<dbReference type="Proteomes" id="UP000000595">
    <property type="component" value="Chromosome"/>
</dbReference>
<dbReference type="GO" id="GO:0003861">
    <property type="term" value="F:3-isopropylmalate dehydratase activity"/>
    <property type="evidence" value="ECO:0007669"/>
    <property type="project" value="UniProtKB-UniRule"/>
</dbReference>
<dbReference type="GO" id="GO:0009098">
    <property type="term" value="P:L-leucine biosynthetic process"/>
    <property type="evidence" value="ECO:0007669"/>
    <property type="project" value="UniProtKB-UniRule"/>
</dbReference>
<dbReference type="CDD" id="cd01577">
    <property type="entry name" value="IPMI_Swivel"/>
    <property type="match status" value="1"/>
</dbReference>
<dbReference type="FunFam" id="3.20.19.10:FF:000007">
    <property type="entry name" value="Isopropylmalate/citramalate isomerase small subunit"/>
    <property type="match status" value="1"/>
</dbReference>
<dbReference type="Gene3D" id="3.20.19.10">
    <property type="entry name" value="Aconitase, domain 4"/>
    <property type="match status" value="1"/>
</dbReference>
<dbReference type="HAMAP" id="MF_01032">
    <property type="entry name" value="LeuD_type2"/>
    <property type="match status" value="1"/>
</dbReference>
<dbReference type="InterPro" id="IPR015928">
    <property type="entry name" value="Aconitase/3IPM_dehydase_swvl"/>
</dbReference>
<dbReference type="InterPro" id="IPR000573">
    <property type="entry name" value="AconitaseA/IPMdHydase_ssu_swvl"/>
</dbReference>
<dbReference type="InterPro" id="IPR033940">
    <property type="entry name" value="IPMI_Swivel"/>
</dbReference>
<dbReference type="InterPro" id="IPR050075">
    <property type="entry name" value="LeuD"/>
</dbReference>
<dbReference type="InterPro" id="IPR011827">
    <property type="entry name" value="LeuD_type2/HacB/DmdB"/>
</dbReference>
<dbReference type="NCBIfam" id="TIGR02087">
    <property type="entry name" value="LEUD_arch"/>
    <property type="match status" value="1"/>
</dbReference>
<dbReference type="PANTHER" id="PTHR43345:SF9">
    <property type="entry name" value="3-ISOPROPYLMALATE DEHYDRATASE SMALL SUBUNIT"/>
    <property type="match status" value="1"/>
</dbReference>
<dbReference type="PANTHER" id="PTHR43345">
    <property type="entry name" value="3-ISOPROPYLMALATE DEHYDRATASE SMALL SUBUNIT 2-RELATED-RELATED"/>
    <property type="match status" value="1"/>
</dbReference>
<dbReference type="Pfam" id="PF00694">
    <property type="entry name" value="Aconitase_C"/>
    <property type="match status" value="1"/>
</dbReference>
<dbReference type="SUPFAM" id="SSF52016">
    <property type="entry name" value="LeuD/IlvD-like"/>
    <property type="match status" value="1"/>
</dbReference>
<name>LEUD_METMA</name>
<proteinExistence type="inferred from homology"/>
<accession>Q8PWT6</accession>
<feature type="chain" id="PRO_0000141941" description="3-isopropylmalate dehydratase small subunit">
    <location>
        <begin position="1"/>
        <end position="162"/>
    </location>
</feature>
<gene>
    <name type="primary">leuD</name>
    <name type="ordered locus">MM_1490</name>
</gene>
<keyword id="KW-0028">Amino-acid biosynthesis</keyword>
<keyword id="KW-0100">Branched-chain amino acid biosynthesis</keyword>
<keyword id="KW-0432">Leucine biosynthesis</keyword>
<keyword id="KW-0456">Lyase</keyword>
<evidence type="ECO:0000250" key="1"/>
<evidence type="ECO:0000305" key="2"/>
<reference key="1">
    <citation type="journal article" date="2002" name="J. Mol. Microbiol. Biotechnol.">
        <title>The genome of Methanosarcina mazei: evidence for lateral gene transfer between Bacteria and Archaea.</title>
        <authorList>
            <person name="Deppenmeier U."/>
            <person name="Johann A."/>
            <person name="Hartsch T."/>
            <person name="Merkl R."/>
            <person name="Schmitz R.A."/>
            <person name="Martinez-Arias R."/>
            <person name="Henne A."/>
            <person name="Wiezer A."/>
            <person name="Baeumer S."/>
            <person name="Jacobi C."/>
            <person name="Brueggemann H."/>
            <person name="Lienard T."/>
            <person name="Christmann A."/>
            <person name="Boemecke M."/>
            <person name="Steckel S."/>
            <person name="Bhattacharyya A."/>
            <person name="Lykidis A."/>
            <person name="Overbeek R."/>
            <person name="Klenk H.-P."/>
            <person name="Gunsalus R.P."/>
            <person name="Fritz H.-J."/>
            <person name="Gottschalk G."/>
        </authorList>
    </citation>
    <scope>NUCLEOTIDE SEQUENCE [LARGE SCALE GENOMIC DNA]</scope>
    <source>
        <strain>ATCC BAA-159 / DSM 3647 / Goe1 / Go1 / JCM 11833 / OCM 88</strain>
    </source>
</reference>